<name>RAVA_YERPG</name>
<accession>A9QYG5</accession>
<sequence>MAQSSQLAERISRLSHALESGLYERQEAIRLCLLAALSGESVFLLGPPGIAKSLIARRLKFAFRHARAFEYLMTRFSTPEEVFGPLSIQALKEEGRYQRMTGGYLPEAEIVFLDEIWKAGPAILNTLLTAINERRFRNGDREDSIPMRLLVTASNELPDADSSLEALYDRMLIRLWLDRVQEKQNFRSLLISRQNENHNPVAENLSITDEEFHQWQPLIDKITLPDHCFELIFQLRQRLSALEHTPYVSDRRWKKALRLLQASAFFSGRDEITPIDLILLKDCLWHDLNSFKLLQQQLEQLLTEQGYQQQNLLMKLQDINSKWLQHQQQQSDHQALTVVKQSGMFSRKAQYALPDNLTDSTLTLLLQKPLNLHDIQVNHLQVDKEALAQWLNKGGALRAKLNGVGYAQSIDAEIDDQLHIIILDVSRQPSTLSLPGATTTSVPPELLLALTKLESTLAEQRRLFSQHQPCLFTPSSWLAKIEASLLQVVEQLQFQQIQFQQRKFQQQKHSGH</sequence>
<keyword id="KW-0067">ATP-binding</keyword>
<keyword id="KW-0143">Chaperone</keyword>
<keyword id="KW-0963">Cytoplasm</keyword>
<keyword id="KW-0378">Hydrolase</keyword>
<keyword id="KW-0547">Nucleotide-binding</keyword>
<comment type="function">
    <text evidence="1">Component of the RavA-ViaA chaperone complex, which may act on the membrane to optimize the function of some of the respiratory chains. RavA functions as an ATPase.</text>
</comment>
<comment type="catalytic activity">
    <reaction evidence="1">
        <text>ATP + H2O = ADP + phosphate + H(+)</text>
        <dbReference type="Rhea" id="RHEA:13065"/>
        <dbReference type="ChEBI" id="CHEBI:15377"/>
        <dbReference type="ChEBI" id="CHEBI:15378"/>
        <dbReference type="ChEBI" id="CHEBI:30616"/>
        <dbReference type="ChEBI" id="CHEBI:43474"/>
        <dbReference type="ChEBI" id="CHEBI:456216"/>
    </reaction>
</comment>
<comment type="activity regulation">
    <text evidence="1">ATPase activity is stimulated by ViaA.</text>
</comment>
<comment type="subunit">
    <text evidence="1">Homohexamer. Interacts with ViaA.</text>
</comment>
<comment type="subcellular location">
    <subcellularLocation>
        <location evidence="1">Cytoplasm</location>
    </subcellularLocation>
</comment>
<comment type="similarity">
    <text evidence="1">Belongs to the RavA family.</text>
</comment>
<evidence type="ECO:0000255" key="1">
    <source>
        <dbReference type="HAMAP-Rule" id="MF_01625"/>
    </source>
</evidence>
<gene>
    <name evidence="1" type="primary">ravA</name>
    <name type="ordered locus">YpAngola_A0005</name>
</gene>
<reference key="1">
    <citation type="journal article" date="2010" name="J. Bacteriol.">
        <title>Genome sequence of the deep-rooted Yersinia pestis strain Angola reveals new insights into the evolution and pangenome of the plague bacterium.</title>
        <authorList>
            <person name="Eppinger M."/>
            <person name="Worsham P.L."/>
            <person name="Nikolich M.P."/>
            <person name="Riley D.R."/>
            <person name="Sebastian Y."/>
            <person name="Mou S."/>
            <person name="Achtman M."/>
            <person name="Lindler L.E."/>
            <person name="Ravel J."/>
        </authorList>
    </citation>
    <scope>NUCLEOTIDE SEQUENCE [LARGE SCALE GENOMIC DNA]</scope>
    <source>
        <strain>Angola</strain>
    </source>
</reference>
<feature type="chain" id="PRO_1000186138" description="Regulatory ATPase RavA">
    <location>
        <begin position="1"/>
        <end position="512"/>
    </location>
</feature>
<feature type="binding site" evidence="1">
    <location>
        <position position="23"/>
    </location>
    <ligand>
        <name>ADP</name>
        <dbReference type="ChEBI" id="CHEBI:456216"/>
    </ligand>
</feature>
<feature type="binding site" evidence="1">
    <location>
        <position position="49"/>
    </location>
    <ligand>
        <name>ADP</name>
        <dbReference type="ChEBI" id="CHEBI:456216"/>
    </ligand>
</feature>
<feature type="binding site" evidence="1">
    <location>
        <position position="50"/>
    </location>
    <ligand>
        <name>ADP</name>
        <dbReference type="ChEBI" id="CHEBI:456216"/>
    </ligand>
</feature>
<feature type="binding site" evidence="1">
    <location>
        <position position="51"/>
    </location>
    <ligand>
        <name>ADP</name>
        <dbReference type="ChEBI" id="CHEBI:456216"/>
    </ligand>
</feature>
<feature type="binding site" evidence="1">
    <location>
        <position position="52"/>
    </location>
    <ligand>
        <name>ADP</name>
        <dbReference type="ChEBI" id="CHEBI:456216"/>
    </ligand>
</feature>
<feature type="binding site" evidence="1">
    <location>
        <position position="53"/>
    </location>
    <ligand>
        <name>ADP</name>
        <dbReference type="ChEBI" id="CHEBI:456216"/>
    </ligand>
</feature>
<feature type="binding site" evidence="1">
    <location>
        <position position="54"/>
    </location>
    <ligand>
        <name>ADP</name>
        <dbReference type="ChEBI" id="CHEBI:456216"/>
    </ligand>
</feature>
<feature type="binding site" evidence="1">
    <location>
        <position position="196"/>
    </location>
    <ligand>
        <name>ADP</name>
        <dbReference type="ChEBI" id="CHEBI:456216"/>
    </ligand>
</feature>
<dbReference type="EC" id="3.6.1.-" evidence="1"/>
<dbReference type="EMBL" id="CP000901">
    <property type="protein sequence ID" value="ABX86752.1"/>
    <property type="molecule type" value="Genomic_DNA"/>
</dbReference>
<dbReference type="RefSeq" id="WP_012228846.1">
    <property type="nucleotide sequence ID" value="NC_010159.1"/>
</dbReference>
<dbReference type="SMR" id="A9QYG5"/>
<dbReference type="KEGG" id="ypg:YpAngola_A0005"/>
<dbReference type="PATRIC" id="fig|349746.12.peg.953"/>
<dbReference type="GO" id="GO:0005737">
    <property type="term" value="C:cytoplasm"/>
    <property type="evidence" value="ECO:0007669"/>
    <property type="project" value="UniProtKB-SubCell"/>
</dbReference>
<dbReference type="GO" id="GO:0005524">
    <property type="term" value="F:ATP binding"/>
    <property type="evidence" value="ECO:0007669"/>
    <property type="project" value="UniProtKB-KW"/>
</dbReference>
<dbReference type="GO" id="GO:0016887">
    <property type="term" value="F:ATP hydrolysis activity"/>
    <property type="evidence" value="ECO:0007669"/>
    <property type="project" value="UniProtKB-UniRule"/>
</dbReference>
<dbReference type="CDD" id="cd00009">
    <property type="entry name" value="AAA"/>
    <property type="match status" value="1"/>
</dbReference>
<dbReference type="Gene3D" id="1.20.58.1510">
    <property type="match status" value="1"/>
</dbReference>
<dbReference type="Gene3D" id="2.40.128.430">
    <property type="match status" value="1"/>
</dbReference>
<dbReference type="Gene3D" id="3.40.50.300">
    <property type="entry name" value="P-loop containing nucleotide triphosphate hydrolases"/>
    <property type="match status" value="1"/>
</dbReference>
<dbReference type="HAMAP" id="MF_01625">
    <property type="entry name" value="ATPase_RavA"/>
    <property type="match status" value="1"/>
</dbReference>
<dbReference type="InterPro" id="IPR003593">
    <property type="entry name" value="AAA+_ATPase"/>
</dbReference>
<dbReference type="InterPro" id="IPR023671">
    <property type="entry name" value="ATPase_RavA"/>
</dbReference>
<dbReference type="InterPro" id="IPR022547">
    <property type="entry name" value="ATPase_RavA_C"/>
</dbReference>
<dbReference type="InterPro" id="IPR045427">
    <property type="entry name" value="MoxR"/>
</dbReference>
<dbReference type="InterPro" id="IPR027417">
    <property type="entry name" value="P-loop_NTPase"/>
</dbReference>
<dbReference type="InterPro" id="IPR041538">
    <property type="entry name" value="RavA-like_AAA_lid"/>
</dbReference>
<dbReference type="InterPro" id="IPR050513">
    <property type="entry name" value="RavA_ATPases"/>
</dbReference>
<dbReference type="InterPro" id="IPR046898">
    <property type="entry name" value="RavA_LARA_dom"/>
</dbReference>
<dbReference type="InterPro" id="IPR046932">
    <property type="entry name" value="RavA_LARA_sf"/>
</dbReference>
<dbReference type="NCBIfam" id="NF010054">
    <property type="entry name" value="PRK13531.1"/>
    <property type="match status" value="1"/>
</dbReference>
<dbReference type="PANTHER" id="PTHR32204">
    <property type="entry name" value="ATPASE RAVA"/>
    <property type="match status" value="1"/>
</dbReference>
<dbReference type="PANTHER" id="PTHR32204:SF0">
    <property type="entry name" value="ATPASE RAVA"/>
    <property type="match status" value="1"/>
</dbReference>
<dbReference type="Pfam" id="PF17868">
    <property type="entry name" value="AAA_lid_8"/>
    <property type="match status" value="1"/>
</dbReference>
<dbReference type="Pfam" id="PF12592">
    <property type="entry name" value="ATPase_RavA_C"/>
    <property type="match status" value="1"/>
</dbReference>
<dbReference type="Pfam" id="PF20030">
    <property type="entry name" value="bpMoxR"/>
    <property type="match status" value="1"/>
</dbReference>
<dbReference type="Pfam" id="PF20265">
    <property type="entry name" value="LARA_dom"/>
    <property type="match status" value="1"/>
</dbReference>
<dbReference type="SMART" id="SM00382">
    <property type="entry name" value="AAA"/>
    <property type="match status" value="1"/>
</dbReference>
<dbReference type="SUPFAM" id="SSF52540">
    <property type="entry name" value="P-loop containing nucleoside triphosphate hydrolases"/>
    <property type="match status" value="1"/>
</dbReference>
<proteinExistence type="inferred from homology"/>
<protein>
    <recommendedName>
        <fullName evidence="1">Regulatory ATPase RavA</fullName>
        <ecNumber evidence="1">3.6.1.-</ecNumber>
    </recommendedName>
    <alternativeName>
        <fullName evidence="1">Regulatory ATPase variant A</fullName>
    </alternativeName>
</protein>
<organism>
    <name type="scientific">Yersinia pestis bv. Antiqua (strain Angola)</name>
    <dbReference type="NCBI Taxonomy" id="349746"/>
    <lineage>
        <taxon>Bacteria</taxon>
        <taxon>Pseudomonadati</taxon>
        <taxon>Pseudomonadota</taxon>
        <taxon>Gammaproteobacteria</taxon>
        <taxon>Enterobacterales</taxon>
        <taxon>Yersiniaceae</taxon>
        <taxon>Yersinia</taxon>
    </lineage>
</organism>